<comment type="function">
    <text evidence="1">Involved in storage lipid mobilization during the growth of higher plant seedling.</text>
</comment>
<comment type="catalytic activity">
    <reaction evidence="1">
        <text>D-threo-isocitrate = glyoxylate + succinate</text>
        <dbReference type="Rhea" id="RHEA:13245"/>
        <dbReference type="ChEBI" id="CHEBI:15562"/>
        <dbReference type="ChEBI" id="CHEBI:30031"/>
        <dbReference type="ChEBI" id="CHEBI:36655"/>
        <dbReference type="EC" id="4.1.3.1"/>
    </reaction>
</comment>
<comment type="cofactor">
    <cofactor evidence="2">
        <name>Mg(2+)</name>
        <dbReference type="ChEBI" id="CHEBI:18420"/>
    </cofactor>
</comment>
<comment type="pathway">
    <text evidence="1">Carbohydrate metabolism; glyoxylate cycle; (S)-malate from isocitrate: step 1/2.</text>
</comment>
<comment type="subunit">
    <text evidence="1">Homotetramer.</text>
</comment>
<comment type="subcellular location">
    <subcellularLocation>
        <location evidence="1">Glyoxysome</location>
    </subcellularLocation>
</comment>
<comment type="similarity">
    <text evidence="4">Belongs to the isocitrate lyase/PEP mutase superfamily. Isocitrate lyase family.</text>
</comment>
<protein>
    <recommendedName>
        <fullName evidence="1">Isocitrate lyase</fullName>
        <shortName evidence="1">ICL</shortName>
        <ecNumber evidence="1">4.1.3.1</ecNumber>
    </recommendedName>
    <alternativeName>
        <fullName evidence="1">Isocitrase</fullName>
    </alternativeName>
    <alternativeName>
        <fullName evidence="1">Isocitratsysase</fullName>
    </alternativeName>
</protein>
<feature type="chain" id="PRO_0000068810" description="Isocitrate lyase">
    <location>
        <begin position="1"/>
        <end position="576"/>
    </location>
</feature>
<feature type="short sequence motif" description="Microbody targeting signal" evidence="3">
    <location>
        <begin position="574"/>
        <end position="576"/>
    </location>
</feature>
<feature type="active site" description="Proton acceptor" evidence="2">
    <location>
        <position position="213"/>
    </location>
</feature>
<feature type="binding site" evidence="2">
    <location>
        <begin position="104"/>
        <end position="106"/>
    </location>
    <ligand>
        <name>substrate</name>
    </ligand>
</feature>
<feature type="binding site" evidence="2">
    <location>
        <position position="175"/>
    </location>
    <ligand>
        <name>Mg(2+)</name>
        <dbReference type="ChEBI" id="CHEBI:18420"/>
    </ligand>
</feature>
<feature type="binding site" evidence="2">
    <location>
        <begin position="214"/>
        <end position="215"/>
    </location>
    <ligand>
        <name>substrate</name>
    </ligand>
</feature>
<feature type="binding site" evidence="2">
    <location>
        <position position="250"/>
    </location>
    <ligand>
        <name>substrate</name>
    </ligand>
</feature>
<feature type="binding site" evidence="2">
    <location>
        <begin position="437"/>
        <end position="441"/>
    </location>
    <ligand>
        <name>substrate</name>
    </ligand>
</feature>
<feature type="binding site" evidence="2">
    <location>
        <position position="472"/>
    </location>
    <ligand>
        <name>substrate</name>
    </ligand>
</feature>
<reference key="1">
    <citation type="journal article" date="1987" name="Plant Mol. Biol.">
        <title>Nucleic acid (cDNA) and amino acid sequences of isocitrate lyase from castor bean.</title>
        <authorList>
            <person name="Beeching J.R."/>
            <person name="Northcote D.H."/>
        </authorList>
        <dbReference type="AGRICOLA" id="IND91035316"/>
    </citation>
    <scope>NUCLEOTIDE SEQUENCE [MRNA]</scope>
</reference>
<dbReference type="EC" id="4.1.3.1" evidence="1"/>
<dbReference type="EMBL" id="M17145">
    <property type="protein sequence ID" value="AAA53378.1"/>
    <property type="molecule type" value="mRNA"/>
</dbReference>
<dbReference type="PIR" id="S06274">
    <property type="entry name" value="WZCSI"/>
</dbReference>
<dbReference type="RefSeq" id="NP_001310641.1">
    <property type="nucleotide sequence ID" value="NM_001323712.1"/>
</dbReference>
<dbReference type="SMR" id="P15479"/>
<dbReference type="GeneID" id="8264280"/>
<dbReference type="KEGG" id="rcu:8264280"/>
<dbReference type="eggNOG" id="KOG1260">
    <property type="taxonomic scope" value="Eukaryota"/>
</dbReference>
<dbReference type="OMA" id="YVSGWQV"/>
<dbReference type="OrthoDB" id="4078635at2759"/>
<dbReference type="UniPathway" id="UPA00703">
    <property type="reaction ID" value="UER00719"/>
</dbReference>
<dbReference type="GO" id="GO:0009514">
    <property type="term" value="C:glyoxysome"/>
    <property type="evidence" value="ECO:0007669"/>
    <property type="project" value="UniProtKB-SubCell"/>
</dbReference>
<dbReference type="GO" id="GO:0004451">
    <property type="term" value="F:isocitrate lyase activity"/>
    <property type="evidence" value="ECO:0007669"/>
    <property type="project" value="UniProtKB-EC"/>
</dbReference>
<dbReference type="GO" id="GO:0046872">
    <property type="term" value="F:metal ion binding"/>
    <property type="evidence" value="ECO:0007669"/>
    <property type="project" value="UniProtKB-KW"/>
</dbReference>
<dbReference type="GO" id="GO:0006097">
    <property type="term" value="P:glyoxylate cycle"/>
    <property type="evidence" value="ECO:0007669"/>
    <property type="project" value="UniProtKB-UniPathway"/>
</dbReference>
<dbReference type="GO" id="GO:0006099">
    <property type="term" value="P:tricarboxylic acid cycle"/>
    <property type="evidence" value="ECO:0007669"/>
    <property type="project" value="UniProtKB-KW"/>
</dbReference>
<dbReference type="CDD" id="cd00377">
    <property type="entry name" value="ICL_PEPM"/>
    <property type="match status" value="1"/>
</dbReference>
<dbReference type="FunFam" id="1.10.10.850:FF:000001">
    <property type="entry name" value="Isocitrate lyase"/>
    <property type="match status" value="1"/>
</dbReference>
<dbReference type="Gene3D" id="1.10.10.850">
    <property type="match status" value="1"/>
</dbReference>
<dbReference type="Gene3D" id="3.20.20.60">
    <property type="entry name" value="Phosphoenolpyruvate-binding domains"/>
    <property type="match status" value="1"/>
</dbReference>
<dbReference type="InterPro" id="IPR039556">
    <property type="entry name" value="ICL/PEPM"/>
</dbReference>
<dbReference type="InterPro" id="IPR006254">
    <property type="entry name" value="Isocitrate_lyase"/>
</dbReference>
<dbReference type="InterPro" id="IPR018523">
    <property type="entry name" value="Isocitrate_lyase_ph_CS"/>
</dbReference>
<dbReference type="InterPro" id="IPR015813">
    <property type="entry name" value="Pyrv/PenolPyrv_kinase-like_dom"/>
</dbReference>
<dbReference type="InterPro" id="IPR040442">
    <property type="entry name" value="Pyrv_kinase-like_dom_sf"/>
</dbReference>
<dbReference type="NCBIfam" id="TIGR01346">
    <property type="entry name" value="isocit_lyase"/>
    <property type="match status" value="1"/>
</dbReference>
<dbReference type="PANTHER" id="PTHR21631:SF3">
    <property type="entry name" value="BIFUNCTIONAL GLYOXYLATE CYCLE PROTEIN"/>
    <property type="match status" value="1"/>
</dbReference>
<dbReference type="PANTHER" id="PTHR21631">
    <property type="entry name" value="ISOCITRATE LYASE/MALATE SYNTHASE"/>
    <property type="match status" value="1"/>
</dbReference>
<dbReference type="Pfam" id="PF00463">
    <property type="entry name" value="ICL"/>
    <property type="match status" value="1"/>
</dbReference>
<dbReference type="PIRSF" id="PIRSF001362">
    <property type="entry name" value="Isocit_lyase"/>
    <property type="match status" value="1"/>
</dbReference>
<dbReference type="SUPFAM" id="SSF51621">
    <property type="entry name" value="Phosphoenolpyruvate/pyruvate domain"/>
    <property type="match status" value="1"/>
</dbReference>
<dbReference type="PROSITE" id="PS00161">
    <property type="entry name" value="ISOCITRATE_LYASE"/>
    <property type="match status" value="1"/>
</dbReference>
<evidence type="ECO:0000250" key="1">
    <source>
        <dbReference type="UniProtKB" id="P28297"/>
    </source>
</evidence>
<evidence type="ECO:0000250" key="2">
    <source>
        <dbReference type="UniProtKB" id="P9WKK7"/>
    </source>
</evidence>
<evidence type="ECO:0000255" key="3"/>
<evidence type="ECO:0000305" key="4"/>
<name>ACEA_RICCO</name>
<organism>
    <name type="scientific">Ricinus communis</name>
    <name type="common">Castor bean</name>
    <dbReference type="NCBI Taxonomy" id="3988"/>
    <lineage>
        <taxon>Eukaryota</taxon>
        <taxon>Viridiplantae</taxon>
        <taxon>Streptophyta</taxon>
        <taxon>Embryophyta</taxon>
        <taxon>Tracheophyta</taxon>
        <taxon>Spermatophyta</taxon>
        <taxon>Magnoliopsida</taxon>
        <taxon>eudicotyledons</taxon>
        <taxon>Gunneridae</taxon>
        <taxon>Pentapetalae</taxon>
        <taxon>rosids</taxon>
        <taxon>fabids</taxon>
        <taxon>Malpighiales</taxon>
        <taxon>Euphorbiaceae</taxon>
        <taxon>Acalyphoideae</taxon>
        <taxon>Acalypheae</taxon>
        <taxon>Ricinus</taxon>
    </lineage>
</organism>
<keyword id="KW-0329">Glyoxylate bypass</keyword>
<keyword id="KW-0330">Glyoxysome</keyword>
<keyword id="KW-0456">Lyase</keyword>
<keyword id="KW-0460">Magnesium</keyword>
<keyword id="KW-0479">Metal-binding</keyword>
<keyword id="KW-0576">Peroxisome</keyword>
<keyword id="KW-0816">Tricarboxylic acid cycle</keyword>
<proteinExistence type="evidence at transcript level"/>
<accession>P15479</accession>
<sequence>MAASFSGPSMIMEEEGRFEAEVAEVQAWWNSERFKLTRRPYTARDVVALRGNLKQSYASNELAKKLWRTLKTHQANGTASRTFGALDPVQVTMMAKHLDSIYVSGWQCSSTHTTTNEPGPDLADYPYDTVPNKVEHLFFAQQYHDRKQREARMSMSREERARTPYVDYLKPIIADGDTGFGGTTATVKLCKLFVERGAAGVHIEDQSSVTKKCGHMAGKVLVAISEHINRLVAARLQFDVMGVETLLVARTDAEAANLIQSNVDTRDHQFILGVTNPNLRGKSLATLLATGMANGKTGAELQATEDNWLAMAQLKTFPECVMDAIKNMNAGEDEKRRRMNEWMNHTSYDKCLSYEQGREIADRMGLKNLFWDWDLPRTREGFYRFKGSVMAAVVRGRAFAPHADIIWMETAKPDFAECTAFAEGVKSMHPEIMLAYNLSPSFNWDASGMTDEQMRDFIPRIARLGFCWQFITLGGFHADALVIDTFAKDYARRGMLAYVERIQREERKNGVDTLAHQKWSGANYYDRYLKTVQGGISSTAAMGKGVTEEQFKETWTRPGAMEMGSAGSEVVAKARM</sequence>